<proteinExistence type="evidence at protein level"/>
<gene>
    <name type="primary">LST1</name>
    <name type="synonym">B144</name>
</gene>
<protein>
    <recommendedName>
        <fullName>Leukocyte-specific transcript 1 protein</fullName>
    </recommendedName>
    <alternativeName>
        <fullName>Protein B144</fullName>
    </alternativeName>
</protein>
<reference evidence="12" key="1">
    <citation type="journal article" date="1995" name="Immunogenetics">
        <title>Cloning and genomic characterization of LST1: a new gene in the human TNF region.</title>
        <authorList>
            <person name="Holzinger I."/>
            <person name="de Baey A."/>
            <person name="Messer G."/>
            <person name="Kick G."/>
            <person name="Zwierzina H."/>
            <person name="Weiss E.H."/>
        </authorList>
    </citation>
    <scope>NUCLEOTIDE SEQUENCE [GENOMIC DNA] (ISOFORM 3)</scope>
    <scope>TISSUE SPECIFICITY</scope>
    <scope>INDUCTION BY IFNG</scope>
    <source>
        <tissue evidence="6">Blood</tissue>
    </source>
</reference>
<reference evidence="12" key="2">
    <citation type="journal article" date="1997" name="Genomics">
        <title>Complex expression pattern of the TNF region gene LST1 through differential regulation, initiation, and alternative splicing.</title>
        <authorList>
            <person name="de Baey A."/>
            <person name="Fellerhoff B."/>
            <person name="Maier S."/>
            <person name="Martinozzi S."/>
            <person name="Weidle U."/>
            <person name="Weiss E.H."/>
        </authorList>
    </citation>
    <scope>NUCLEOTIDE SEQUENCE [MRNA] (ISOFORMS 1; 2 AND 4)</scope>
    <scope>TISSUE SPECIFICITY</scope>
    <scope>INDUCTION BY IFNG</scope>
    <source>
        <tissue evidence="7">Lymphoblast</tissue>
    </source>
</reference>
<reference evidence="12" key="3">
    <citation type="journal article" date="2000" name="J. Immunol.">
        <title>LST1: a gene with extensive alternative splicing and immunomodulatory function.</title>
        <authorList>
            <person name="Rollinger-Holzinger I."/>
            <person name="Eibl B."/>
            <person name="Pauly M."/>
            <person name="Griesser U."/>
            <person name="Hentges F."/>
            <person name="Auer B."/>
            <person name="Pall G."/>
            <person name="Schratzberger P."/>
            <person name="Niederwieser D."/>
            <person name="Weiss E.H."/>
            <person name="Zwierzina H."/>
        </authorList>
    </citation>
    <scope>NUCLEOTIDE SEQUENCE [MRNA] (ISOFORMS 5; 6; 7; 8 AND 9)</scope>
    <scope>FUNCTION</scope>
    <scope>SUBCELLULAR LOCATION</scope>
    <source>
        <tissue evidence="3">Peripheral blood</tissue>
    </source>
</reference>
<reference key="4">
    <citation type="journal article" date="2003" name="Genome Res.">
        <title>Analysis of the gene-dense major histocompatibility complex class III region and its comparison to mouse.</title>
        <authorList>
            <person name="Xie T."/>
            <person name="Rowen L."/>
            <person name="Aguado B."/>
            <person name="Ahearn M.E."/>
            <person name="Madan A."/>
            <person name="Qin S."/>
            <person name="Campbell R.D."/>
            <person name="Hood L."/>
        </authorList>
    </citation>
    <scope>NUCLEOTIDE SEQUENCE [LARGE SCALE GENOMIC DNA]</scope>
</reference>
<reference evidence="12 14" key="5">
    <citation type="submission" date="1999-09" db="EMBL/GenBank/DDBJ databases">
        <title>Homo sapiens 2,229,817bp genomic DNA of 6p21.3 HLA class I region.</title>
        <authorList>
            <person name="Shiina S."/>
            <person name="Tamiya G."/>
            <person name="Oka A."/>
            <person name="Inoko H."/>
        </authorList>
    </citation>
    <scope>NUCLEOTIDE SEQUENCE [LARGE SCALE GENOMIC DNA]</scope>
</reference>
<reference key="6">
    <citation type="journal article" date="2003" name="Nature">
        <title>The DNA sequence and analysis of human chromosome 6.</title>
        <authorList>
            <person name="Mungall A.J."/>
            <person name="Palmer S.A."/>
            <person name="Sims S.K."/>
            <person name="Edwards C.A."/>
            <person name="Ashurst J.L."/>
            <person name="Wilming L."/>
            <person name="Jones M.C."/>
            <person name="Horton R."/>
            <person name="Hunt S.E."/>
            <person name="Scott C.E."/>
            <person name="Gilbert J.G.R."/>
            <person name="Clamp M.E."/>
            <person name="Bethel G."/>
            <person name="Milne S."/>
            <person name="Ainscough R."/>
            <person name="Almeida J.P."/>
            <person name="Ambrose K.D."/>
            <person name="Andrews T.D."/>
            <person name="Ashwell R.I.S."/>
            <person name="Babbage A.K."/>
            <person name="Bagguley C.L."/>
            <person name="Bailey J."/>
            <person name="Banerjee R."/>
            <person name="Barker D.J."/>
            <person name="Barlow K.F."/>
            <person name="Bates K."/>
            <person name="Beare D.M."/>
            <person name="Beasley H."/>
            <person name="Beasley O."/>
            <person name="Bird C.P."/>
            <person name="Blakey S.E."/>
            <person name="Bray-Allen S."/>
            <person name="Brook J."/>
            <person name="Brown A.J."/>
            <person name="Brown J.Y."/>
            <person name="Burford D.C."/>
            <person name="Burrill W."/>
            <person name="Burton J."/>
            <person name="Carder C."/>
            <person name="Carter N.P."/>
            <person name="Chapman J.C."/>
            <person name="Clark S.Y."/>
            <person name="Clark G."/>
            <person name="Clee C.M."/>
            <person name="Clegg S."/>
            <person name="Cobley V."/>
            <person name="Collier R.E."/>
            <person name="Collins J.E."/>
            <person name="Colman L.K."/>
            <person name="Corby N.R."/>
            <person name="Coville G.J."/>
            <person name="Culley K.M."/>
            <person name="Dhami P."/>
            <person name="Davies J."/>
            <person name="Dunn M."/>
            <person name="Earthrowl M.E."/>
            <person name="Ellington A.E."/>
            <person name="Evans K.A."/>
            <person name="Faulkner L."/>
            <person name="Francis M.D."/>
            <person name="Frankish A."/>
            <person name="Frankland J."/>
            <person name="French L."/>
            <person name="Garner P."/>
            <person name="Garnett J."/>
            <person name="Ghori M.J."/>
            <person name="Gilby L.M."/>
            <person name="Gillson C.J."/>
            <person name="Glithero R.J."/>
            <person name="Grafham D.V."/>
            <person name="Grant M."/>
            <person name="Gribble S."/>
            <person name="Griffiths C."/>
            <person name="Griffiths M.N.D."/>
            <person name="Hall R."/>
            <person name="Halls K.S."/>
            <person name="Hammond S."/>
            <person name="Harley J.L."/>
            <person name="Hart E.A."/>
            <person name="Heath P.D."/>
            <person name="Heathcott R."/>
            <person name="Holmes S.J."/>
            <person name="Howden P.J."/>
            <person name="Howe K.L."/>
            <person name="Howell G.R."/>
            <person name="Huckle E."/>
            <person name="Humphray S.J."/>
            <person name="Humphries M.D."/>
            <person name="Hunt A.R."/>
            <person name="Johnson C.M."/>
            <person name="Joy A.A."/>
            <person name="Kay M."/>
            <person name="Keenan S.J."/>
            <person name="Kimberley A.M."/>
            <person name="King A."/>
            <person name="Laird G.K."/>
            <person name="Langford C."/>
            <person name="Lawlor S."/>
            <person name="Leongamornlert D.A."/>
            <person name="Leversha M."/>
            <person name="Lloyd C.R."/>
            <person name="Lloyd D.M."/>
            <person name="Loveland J.E."/>
            <person name="Lovell J."/>
            <person name="Martin S."/>
            <person name="Mashreghi-Mohammadi M."/>
            <person name="Maslen G.L."/>
            <person name="Matthews L."/>
            <person name="McCann O.T."/>
            <person name="McLaren S.J."/>
            <person name="McLay K."/>
            <person name="McMurray A."/>
            <person name="Moore M.J.F."/>
            <person name="Mullikin J.C."/>
            <person name="Niblett D."/>
            <person name="Nickerson T."/>
            <person name="Novik K.L."/>
            <person name="Oliver K."/>
            <person name="Overton-Larty E.K."/>
            <person name="Parker A."/>
            <person name="Patel R."/>
            <person name="Pearce A.V."/>
            <person name="Peck A.I."/>
            <person name="Phillimore B.J.C.T."/>
            <person name="Phillips S."/>
            <person name="Plumb R.W."/>
            <person name="Porter K.M."/>
            <person name="Ramsey Y."/>
            <person name="Ranby S.A."/>
            <person name="Rice C.M."/>
            <person name="Ross M.T."/>
            <person name="Searle S.M."/>
            <person name="Sehra H.K."/>
            <person name="Sheridan E."/>
            <person name="Skuce C.D."/>
            <person name="Smith S."/>
            <person name="Smith M."/>
            <person name="Spraggon L."/>
            <person name="Squares S.L."/>
            <person name="Steward C.A."/>
            <person name="Sycamore N."/>
            <person name="Tamlyn-Hall G."/>
            <person name="Tester J."/>
            <person name="Theaker A.J."/>
            <person name="Thomas D.W."/>
            <person name="Thorpe A."/>
            <person name="Tracey A."/>
            <person name="Tromans A."/>
            <person name="Tubby B."/>
            <person name="Wall M."/>
            <person name="Wallis J.M."/>
            <person name="West A.P."/>
            <person name="White S.S."/>
            <person name="Whitehead S.L."/>
            <person name="Whittaker H."/>
            <person name="Wild A."/>
            <person name="Willey D.J."/>
            <person name="Wilmer T.E."/>
            <person name="Wood J.M."/>
            <person name="Wray P.W."/>
            <person name="Wyatt J.C."/>
            <person name="Young L."/>
            <person name="Younger R.M."/>
            <person name="Bentley D.R."/>
            <person name="Coulson A."/>
            <person name="Durbin R.M."/>
            <person name="Hubbard T."/>
            <person name="Sulston J.E."/>
            <person name="Dunham I."/>
            <person name="Rogers J."/>
            <person name="Beck S."/>
        </authorList>
    </citation>
    <scope>NUCLEOTIDE SEQUENCE [LARGE SCALE GENOMIC DNA]</scope>
</reference>
<reference evidence="12 14" key="7">
    <citation type="submission" date="2005-07" db="EMBL/GenBank/DDBJ databases">
        <authorList>
            <person name="Mural R.J."/>
            <person name="Istrail S."/>
            <person name="Sutton G.G."/>
            <person name="Florea L."/>
            <person name="Halpern A.L."/>
            <person name="Mobarry C.M."/>
            <person name="Lippert R."/>
            <person name="Walenz B."/>
            <person name="Shatkay H."/>
            <person name="Dew I."/>
            <person name="Miller J.R."/>
            <person name="Flanigan M.J."/>
            <person name="Edwards N.J."/>
            <person name="Bolanos R."/>
            <person name="Fasulo D."/>
            <person name="Halldorsson B.V."/>
            <person name="Hannenhalli S."/>
            <person name="Turner R."/>
            <person name="Yooseph S."/>
            <person name="Lu F."/>
            <person name="Nusskern D.R."/>
            <person name="Shue B.C."/>
            <person name="Zheng X.H."/>
            <person name="Zhong F."/>
            <person name="Delcher A.L."/>
            <person name="Huson D.H."/>
            <person name="Kravitz S.A."/>
            <person name="Mouchard L."/>
            <person name="Reinert K."/>
            <person name="Remington K.A."/>
            <person name="Clark A.G."/>
            <person name="Waterman M.S."/>
            <person name="Eichler E.E."/>
            <person name="Adams M.D."/>
            <person name="Hunkapiller M.W."/>
            <person name="Myers E.W."/>
            <person name="Venter J.C."/>
        </authorList>
    </citation>
    <scope>NUCLEOTIDE SEQUENCE [LARGE SCALE GENOMIC DNA]</scope>
</reference>
<reference key="8">
    <citation type="journal article" date="2004" name="Genome Res.">
        <title>The status, quality, and expansion of the NIH full-length cDNA project: the Mammalian Gene Collection (MGC).</title>
        <authorList>
            <consortium name="The MGC Project Team"/>
        </authorList>
    </citation>
    <scope>NUCLEOTIDE SEQUENCE [LARGE SCALE MRNA] (ISOFORM 10)</scope>
</reference>
<reference key="9">
    <citation type="journal article" date="2006" name="Immunogenetics">
        <title>LST1 and NCR3 expression in autoimmune inflammation and in response to IFN-gamma, LPS and microbial infection.</title>
        <authorList>
            <person name="Mulcahy H."/>
            <person name="O'rourke K.P."/>
            <person name="Adams C."/>
            <person name="Molloy M.G."/>
            <person name="O'gara F."/>
        </authorList>
    </citation>
    <scope>NUCLEOTIDE SEQUENCE [MRNA] OF 1-93 (ISOFORM 11)</scope>
    <scope>INDUCTION</scope>
</reference>
<reference evidence="12" key="10">
    <citation type="journal article" date="2001" name="Exp. Cell Res.">
        <title>Functional analysis of B144/LST1: a gene in the tumor necrosis factor cluster that induces formation of long filopodia in eukaryotic cells.</title>
        <authorList>
            <person name="Raghunathan A."/>
            <person name="Sivakamasundari R."/>
            <person name="Wolenski J."/>
            <person name="Poddar R."/>
            <person name="Weissman S.M."/>
        </authorList>
    </citation>
    <scope>FUNCTION</scope>
    <scope>SUBCELLULAR LOCATION</scope>
</reference>
<reference key="11">
    <citation type="journal article" date="2014" name="J. Proteomics">
        <title>An enzyme assisted RP-RPLC approach for in-depth analysis of human liver phosphoproteome.</title>
        <authorList>
            <person name="Bian Y."/>
            <person name="Song C."/>
            <person name="Cheng K."/>
            <person name="Dong M."/>
            <person name="Wang F."/>
            <person name="Huang J."/>
            <person name="Sun D."/>
            <person name="Wang L."/>
            <person name="Ye M."/>
            <person name="Zou H."/>
        </authorList>
    </citation>
    <scope>PHOSPHORYLATION [LARGE SCALE ANALYSIS] AT SER-58</scope>
    <scope>IDENTIFICATION BY MASS SPECTROMETRY [LARGE SCALE ANALYSIS]</scope>
    <source>
        <tissue>Liver</tissue>
    </source>
</reference>
<reference key="12">
    <citation type="journal article" date="2015" name="Proteomics">
        <title>N-terminome analysis of the human mitochondrial proteome.</title>
        <authorList>
            <person name="Vaca Jacome A.S."/>
            <person name="Rabilloud T."/>
            <person name="Schaeffer-Reiss C."/>
            <person name="Rompais M."/>
            <person name="Ayoub D."/>
            <person name="Lane L."/>
            <person name="Bairoch A."/>
            <person name="Van Dorsselaer A."/>
            <person name="Carapito C."/>
        </authorList>
    </citation>
    <scope>IDENTIFICATION BY MASS SPECTROMETRY [LARGE SCALE ANALYSIS]</scope>
</reference>
<keyword id="KW-0025">Alternative splicing</keyword>
<keyword id="KW-0133">Cell shape</keyword>
<keyword id="KW-0333">Golgi apparatus</keyword>
<keyword id="KW-0391">Immunity</keyword>
<keyword id="KW-0472">Membrane</keyword>
<keyword id="KW-0597">Phosphoprotein</keyword>
<keyword id="KW-1267">Proteomics identification</keyword>
<keyword id="KW-1185">Reference proteome</keyword>
<keyword id="KW-0812">Transmembrane</keyword>
<keyword id="KW-1133">Transmembrane helix</keyword>
<sequence length="97" mass="10792">MLSRNDDICIYGGLGLGGLLLLAVVLLSACLCWLHRRVKRLERSWAQGSSEQELHYASLQRLPVPSSEGPDLRGRDKRGTKEDPRADYACIAENKPT</sequence>
<name>LST1_HUMAN</name>
<feature type="chain" id="PRO_0000084507" description="Leukocyte-specific transcript 1 protein">
    <location>
        <begin position="1"/>
        <end position="97"/>
    </location>
</feature>
<feature type="transmembrane region" description="Helical" evidence="1">
    <location>
        <begin position="8"/>
        <end position="28"/>
    </location>
</feature>
<feature type="region of interest" description="Disordered" evidence="2">
    <location>
        <begin position="59"/>
        <end position="97"/>
    </location>
</feature>
<feature type="compositionally biased region" description="Basic and acidic residues" evidence="2">
    <location>
        <begin position="70"/>
        <end position="86"/>
    </location>
</feature>
<feature type="modified residue" description="Phosphoserine" evidence="15">
    <location>
        <position position="58"/>
    </location>
</feature>
<feature type="splice variant" id="VSP_050577" description="In isoform 4." evidence="11">
    <original>MLSRNDDICIYGGLGLGGLLLLAVVLLSACLCWLHRRVKRLERSWA</original>
    <variation>MT</variation>
    <location>
        <begin position="1"/>
        <end position="46"/>
    </location>
</feature>
<feature type="splice variant" id="VSP_050578" description="In isoform 2." evidence="11">
    <original>MLSRNDDICIYGGLGLGGLLLLAVVLLSACLCWLHRRVKRLERSW</original>
    <variation>MIYVSTGAWGWAGSCFWQWSFCPPACVGCIEEHLLSWSQ</variation>
    <location>
        <begin position="1"/>
        <end position="45"/>
    </location>
</feature>
<feature type="splice variant" id="VSP_050579" description="In isoform 3." evidence="12">
    <original>MLSRNDDICIYGGLGLGGLLLLAVVLLSACLCWLHRRVKRLERSW</original>
    <variation>MIYVSTGAWGWAGSCFWQWSFCPPACVGCIEEE</variation>
    <location>
        <begin position="1"/>
        <end position="45"/>
    </location>
</feature>
<feature type="splice variant" id="VSP_050580" description="In isoform 8." evidence="8">
    <original>DICIYGGLGLGGLLLLAVVLLSACLCWLHRRVKRLERSWAQGSSEQELHYASLQRLPVPSSEGPDLRGRDKRGTKEDPRADYACIAENKPT</original>
    <variation>APSVLVPGPGLLRAGTPLCISAEAASAQQ</variation>
    <location>
        <begin position="7"/>
        <end position="97"/>
    </location>
</feature>
<feature type="splice variant" id="VSP_050583" description="In isoform 6, isoform 7, isoform 10 and isoform 13." evidence="8 9">
    <location>
        <begin position="7"/>
        <end position="37"/>
    </location>
</feature>
<feature type="splice variant" id="VSP_050581" description="In isoform 9." evidence="8">
    <original>DICIYGG</original>
    <variation>EAASAQQ</variation>
    <location>
        <begin position="7"/>
        <end position="13"/>
    </location>
</feature>
<feature type="splice variant" id="VSP_050582" description="In isoform 9." evidence="8">
    <location>
        <begin position="14"/>
        <end position="97"/>
    </location>
</feature>
<feature type="splice variant" id="VSP_047367" description="In isoform 12." evidence="12">
    <original>VKRLERSWAQGSSEQELHYASLQRLPVPSSEGPDLRGRDKRGTKEDPRADYACIAENKPT</original>
    <variation>APSVLVPGPGLLRAGTPLCISAEAASAQQ</variation>
    <location>
        <begin position="38"/>
        <end position="97"/>
    </location>
</feature>
<feature type="splice variant" id="VSP_050584" description="In isoform 5." evidence="8">
    <original>VKRLERSWAQGSSEQELHYASLQRLPVPSSEGPDLRGRDKRGTKEDPRADYACIAENKPT</original>
    <variation>GPGLLRAGTPLCISAEAASAQQ</variation>
    <location>
        <begin position="38"/>
        <end position="97"/>
    </location>
</feature>
<feature type="splice variant" id="VSP_046459" description="In isoform 11 and isoform 13." evidence="10">
    <original>W</original>
    <variation>WHLLSWSQ</variation>
    <location>
        <position position="45"/>
    </location>
</feature>
<feature type="splice variant" id="VSP_050586" description="In isoform 7." evidence="8">
    <original>AQGSSEQELHYASLQRLPVPSSEGPDLRGRDKRGTKEDPRADYACIAENKPT</original>
    <variation>HLSVLVPGPGLLRAGTPLCISAEAASAQQ</variation>
    <location>
        <begin position="46"/>
        <end position="97"/>
    </location>
</feature>
<feature type="splice variant" id="VSP_050587" description="In isoform 6." evidence="8">
    <location>
        <begin position="46"/>
        <end position="60"/>
    </location>
</feature>
<feature type="sequence conflict" description="In Ref. 9; AAX45332." evidence="12" ref="9">
    <original>L</original>
    <variation>P</variation>
    <location>
        <position position="21"/>
    </location>
</feature>
<feature type="sequence conflict" description="In Ref. 2; AAB86999." evidence="12" ref="2">
    <original>A</original>
    <variation>T</variation>
    <location>
        <position position="46"/>
    </location>
</feature>
<evidence type="ECO:0000255" key="1"/>
<evidence type="ECO:0000256" key="2">
    <source>
        <dbReference type="SAM" id="MobiDB-lite"/>
    </source>
</evidence>
<evidence type="ECO:0000269" key="3">
    <source>
    </source>
</evidence>
<evidence type="ECO:0000269" key="4">
    <source>
    </source>
</evidence>
<evidence type="ECO:0000269" key="5">
    <source>
    </source>
</evidence>
<evidence type="ECO:0000269" key="6">
    <source>
    </source>
</evidence>
<evidence type="ECO:0000269" key="7">
    <source>
    </source>
</evidence>
<evidence type="ECO:0000303" key="8">
    <source>
    </source>
</evidence>
<evidence type="ECO:0000303" key="9">
    <source>
    </source>
</evidence>
<evidence type="ECO:0000303" key="10">
    <source>
    </source>
</evidence>
<evidence type="ECO:0000303" key="11">
    <source>
    </source>
</evidence>
<evidence type="ECO:0000305" key="12"/>
<evidence type="ECO:0000312" key="13">
    <source>
        <dbReference type="EMBL" id="AAB86999.1"/>
    </source>
</evidence>
<evidence type="ECO:0000312" key="14">
    <source>
        <dbReference type="EMBL" id="BAB63394.1"/>
    </source>
</evidence>
<evidence type="ECO:0007744" key="15">
    <source>
    </source>
</evidence>
<comment type="function">
    <text evidence="3 4">Possible role in modulating immune responses. Induces morphological changes including production of filopodia and microspikes when overexpressed in a variety of cell types and may be involved in dendritic cell maturation. Isoform 1 and isoform 2 have an inhibitory effect on lymphocyte proliferation.</text>
</comment>
<comment type="subcellular location">
    <subcellularLocation>
        <location>Membrane</location>
        <topology>Single-pass membrane protein</topology>
    </subcellularLocation>
    <subcellularLocation>
        <location>Golgi apparatus membrane</location>
        <topology>Single-pass membrane protein</topology>
    </subcellularLocation>
    <subcellularLocation>
        <location>Endomembrane system</location>
        <topology>Single-pass membrane protein</topology>
    </subcellularLocation>
    <text>Also detected in a perinuclear region corresponding to the localization of the Golgi apparatus and throughout the cytoplasm.</text>
</comment>
<comment type="alternative products">
    <event type="alternative splicing"/>
    <isoform>
        <id>O00453-1</id>
        <name evidence="7">1</name>
        <name evidence="7">LST1/A</name>
        <sequence type="displayed"/>
    </isoform>
    <isoform>
        <id>O00453-2</id>
        <name evidence="7">2</name>
        <name evidence="7">LST1/C</name>
        <sequence type="described" ref="VSP_050578"/>
    </isoform>
    <isoform>
        <id>O00453-3</id>
        <name evidence="6">3</name>
        <name evidence="6">pLst1</name>
        <sequence type="described" ref="VSP_050579"/>
    </isoform>
    <isoform>
        <id>O00453-4</id>
        <name evidence="7">4</name>
        <name evidence="7">LST1/E</name>
        <sequence type="described" ref="VSP_050577"/>
    </isoform>
    <isoform>
        <id>O00453-5</id>
        <name evidence="3">5</name>
        <name evidence="3">LST1/K</name>
        <sequence type="described" ref="VSP_050584"/>
    </isoform>
    <isoform>
        <id>O00453-6</id>
        <name evidence="3">6</name>
        <name evidence="3">LST1/L</name>
        <sequence type="described" ref="VSP_050583 VSP_050587"/>
    </isoform>
    <isoform>
        <id>O00453-7</id>
        <name evidence="3">7</name>
        <name evidence="3">LST1/J</name>
        <sequence type="described" ref="VSP_050583 VSP_050586"/>
    </isoform>
    <isoform>
        <id>O00453-8</id>
        <name evidence="3">8</name>
        <name evidence="3">LST1/M</name>
        <sequence type="described" ref="VSP_050580"/>
    </isoform>
    <isoform>
        <id>O00453-9</id>
        <name evidence="3">9</name>
        <name evidence="3">LST1/N</name>
        <sequence type="described" ref="VSP_050581 VSP_050582"/>
    </isoform>
    <isoform>
        <id>O00453-10</id>
        <name>10</name>
        <sequence type="described" ref="VSP_050583"/>
    </isoform>
    <isoform>
        <id>O00453-11</id>
        <name>11</name>
        <name>LST1/P</name>
        <sequence type="described" ref="VSP_046459"/>
    </isoform>
    <isoform>
        <id>O00453-12</id>
        <name>12</name>
        <sequence type="described" ref="VSP_047367"/>
    </isoform>
    <isoform>
        <id>O00453-13</id>
        <name>13</name>
        <sequence type="described" ref="VSP_050583 VSP_046459"/>
    </isoform>
    <text evidence="3">Additional isoforms seem to exist.</text>
</comment>
<comment type="tissue specificity">
    <text evidence="6 7">Expressed in lung, tonsil, thymus, placenta, kidney, fetal spleen, fetal liver and brain.</text>
</comment>
<comment type="induction">
    <text evidence="5 6 7">By IFNG/IFN-gamma. Up-regulated upon autoimmune and bacterially-induced inflammation.</text>
</comment>
<comment type="similarity">
    <text evidence="12">Belongs to the LST1 family.</text>
</comment>
<comment type="sequence caution" evidence="12">
    <conflict type="erroneous termination">
        <sequence resource="EMBL-CDS" id="AAX45332"/>
    </conflict>
    <text>Truncated C-terminus.</text>
</comment>
<accession>O00453</accession>
<accession>B0S8E0</accession>
<accession>B0S8E1</accession>
<accession>B0S8E5</accession>
<accession>O00452</accession>
<accession>O00454</accession>
<accession>Q13669</accession>
<accession>Q2HNT3</accession>
<accession>Q5HYS9</accession>
<accession>Q5SP24</accession>
<accession>Q5STA5</accession>
<accession>Q5STA6</accession>
<accession>Q5STA7</accession>
<accession>Q5STA8</accession>
<accession>Q5STW6</accession>
<accession>Q9UJR5</accession>
<accession>Q9UJR6</accession>
<accession>Q9UJR7</accession>
<accession>Q9UJR8</accession>
<accession>Q9UJS1</accession>
<dbReference type="EMBL" id="U00921">
    <property type="protein sequence ID" value="AAB57724.1"/>
    <property type="molecule type" value="Genomic_DNA"/>
</dbReference>
<dbReference type="EMBL" id="AF000424">
    <property type="protein sequence ID" value="AAB86998.1"/>
    <property type="molecule type" value="mRNA"/>
</dbReference>
<dbReference type="EMBL" id="AF000425">
    <property type="protein sequence ID" value="AAB86999.1"/>
    <property type="molecule type" value="mRNA"/>
</dbReference>
<dbReference type="EMBL" id="AF000426">
    <property type="protein sequence ID" value="AAB87000.1"/>
    <property type="molecule type" value="mRNA"/>
</dbReference>
<dbReference type="EMBL" id="Y18486">
    <property type="protein sequence ID" value="CAB59904.1"/>
    <property type="molecule type" value="mRNA"/>
</dbReference>
<dbReference type="EMBL" id="Y18487">
    <property type="protein sequence ID" value="CAB59905.1"/>
    <property type="molecule type" value="mRNA"/>
</dbReference>
<dbReference type="EMBL" id="Y18488">
    <property type="protein sequence ID" value="CAB60038.1"/>
    <property type="molecule type" value="mRNA"/>
</dbReference>
<dbReference type="EMBL" id="Y18489">
    <property type="protein sequence ID" value="CAB59906.1"/>
    <property type="molecule type" value="mRNA"/>
</dbReference>
<dbReference type="EMBL" id="Y18490">
    <property type="protein sequence ID" value="CAB59903.1"/>
    <property type="molecule type" value="mRNA"/>
</dbReference>
<dbReference type="EMBL" id="AF129756">
    <property type="protein sequence ID" value="AAD18090.1"/>
    <property type="molecule type" value="Genomic_DNA"/>
</dbReference>
<dbReference type="EMBL" id="BA000025">
    <property type="protein sequence ID" value="BAB63394.1"/>
    <property type="molecule type" value="Genomic_DNA"/>
</dbReference>
<dbReference type="EMBL" id="AL662801">
    <property type="status" value="NOT_ANNOTATED_CDS"/>
    <property type="molecule type" value="Genomic_DNA"/>
</dbReference>
<dbReference type="EMBL" id="AL662847">
    <property type="status" value="NOT_ANNOTATED_CDS"/>
    <property type="molecule type" value="Genomic_DNA"/>
</dbReference>
<dbReference type="EMBL" id="AL929587">
    <property type="status" value="NOT_ANNOTATED_CDS"/>
    <property type="molecule type" value="Genomic_DNA"/>
</dbReference>
<dbReference type="EMBL" id="BX248519">
    <property type="status" value="NOT_ANNOTATED_CDS"/>
    <property type="molecule type" value="Genomic_DNA"/>
</dbReference>
<dbReference type="EMBL" id="BX927320">
    <property type="status" value="NOT_ANNOTATED_CDS"/>
    <property type="molecule type" value="Genomic_DNA"/>
</dbReference>
<dbReference type="EMBL" id="CR753892">
    <property type="status" value="NOT_ANNOTATED_CDS"/>
    <property type="molecule type" value="Genomic_DNA"/>
</dbReference>
<dbReference type="EMBL" id="CR759886">
    <property type="status" value="NOT_ANNOTATED_CDS"/>
    <property type="molecule type" value="Genomic_DNA"/>
</dbReference>
<dbReference type="EMBL" id="CR942185">
    <property type="status" value="NOT_ANNOTATED_CDS"/>
    <property type="molecule type" value="Genomic_DNA"/>
</dbReference>
<dbReference type="EMBL" id="CH471081">
    <property type="protein sequence ID" value="EAX03427.1"/>
    <property type="molecule type" value="Genomic_DNA"/>
</dbReference>
<dbReference type="EMBL" id="CH471081">
    <property type="protein sequence ID" value="EAX03431.1"/>
    <property type="molecule type" value="Genomic_DNA"/>
</dbReference>
<dbReference type="EMBL" id="BC103855">
    <property type="protein sequence ID" value="AAI03856.1"/>
    <property type="molecule type" value="mRNA"/>
</dbReference>
<dbReference type="EMBL" id="BC103856">
    <property type="protein sequence ID" value="AAI03857.1"/>
    <property type="molecule type" value="mRNA"/>
</dbReference>
<dbReference type="EMBL" id="AY852266">
    <property type="protein sequence ID" value="AAX45332.1"/>
    <property type="status" value="ALT_SEQ"/>
    <property type="molecule type" value="mRNA"/>
</dbReference>
<dbReference type="CCDS" id="CCDS43450.2">
    <molecule id="O00453-1"/>
</dbReference>
<dbReference type="CCDS" id="CCDS4705.2">
    <molecule id="O00453-10"/>
</dbReference>
<dbReference type="CCDS" id="CCDS54984.1">
    <molecule id="O00453-11"/>
</dbReference>
<dbReference type="CCDS" id="CCDS54985.1">
    <molecule id="O00453-12"/>
</dbReference>
<dbReference type="CCDS" id="CCDS54986.1">
    <molecule id="O00453-5"/>
</dbReference>
<dbReference type="CCDS" id="CCDS54987.1">
    <molecule id="O00453-13"/>
</dbReference>
<dbReference type="RefSeq" id="NP_001160010.1">
    <molecule id="O00453-13"/>
    <property type="nucleotide sequence ID" value="NM_001166538.1"/>
</dbReference>
<dbReference type="RefSeq" id="NP_009092.3">
    <molecule id="O00453-11"/>
    <property type="nucleotide sequence ID" value="NM_007161.3"/>
</dbReference>
<dbReference type="RefSeq" id="NP_995309.2">
    <molecule id="O00453-12"/>
    <property type="nucleotide sequence ID" value="NM_205837.3"/>
</dbReference>
<dbReference type="RefSeq" id="NP_995310.2">
    <molecule id="O00453-10"/>
    <property type="nucleotide sequence ID" value="NM_205838.3"/>
</dbReference>
<dbReference type="RefSeq" id="NP_995311.2">
    <molecule id="O00453-1"/>
    <property type="nucleotide sequence ID" value="NM_205839.3"/>
</dbReference>
<dbReference type="RefSeq" id="NP_995312.2">
    <molecule id="O00453-5"/>
    <property type="nucleotide sequence ID" value="NM_205840.2"/>
</dbReference>
<dbReference type="RefSeq" id="XP_006715269.1">
    <molecule id="O00453-11"/>
    <property type="nucleotide sequence ID" value="XM_006715206.4"/>
</dbReference>
<dbReference type="RefSeq" id="XP_006715272.1">
    <molecule id="O00453-13"/>
    <property type="nucleotide sequence ID" value="XM_006715209.4"/>
</dbReference>
<dbReference type="RefSeq" id="XP_006715273.1">
    <molecule id="O00453-5"/>
    <property type="nucleotide sequence ID" value="XM_006715210.4"/>
</dbReference>
<dbReference type="RefSeq" id="XP_011513216.1">
    <molecule id="O00453-11"/>
    <property type="nucleotide sequence ID" value="XM_011514914.3"/>
</dbReference>
<dbReference type="RefSeq" id="XP_047275313.1">
    <molecule id="O00453-1"/>
    <property type="nucleotide sequence ID" value="XM_047419357.1"/>
</dbReference>
<dbReference type="RefSeq" id="XP_054184493.1">
    <molecule id="O00453-11"/>
    <property type="nucleotide sequence ID" value="XM_054328518.1"/>
</dbReference>
<dbReference type="RefSeq" id="XP_054184494.1">
    <molecule id="O00453-11"/>
    <property type="nucleotide sequence ID" value="XM_054328519.1"/>
</dbReference>
<dbReference type="RefSeq" id="XP_054184495.1">
    <molecule id="O00453-1"/>
    <property type="nucleotide sequence ID" value="XM_054328520.1"/>
</dbReference>
<dbReference type="RefSeq" id="XP_054184496.1">
    <molecule id="O00453-13"/>
    <property type="nucleotide sequence ID" value="XM_054328521.1"/>
</dbReference>
<dbReference type="RefSeq" id="XP_054184497.1">
    <molecule id="O00453-5"/>
    <property type="nucleotide sequence ID" value="XM_054328522.1"/>
</dbReference>
<dbReference type="RefSeq" id="XP_054185883.1">
    <molecule id="O00453-11"/>
    <property type="nucleotide sequence ID" value="XM_054329908.1"/>
</dbReference>
<dbReference type="RefSeq" id="XP_054185884.1">
    <molecule id="O00453-11"/>
    <property type="nucleotide sequence ID" value="XM_054329909.1"/>
</dbReference>
<dbReference type="RefSeq" id="XP_054185885.1">
    <molecule id="O00453-1"/>
    <property type="nucleotide sequence ID" value="XM_054329910.1"/>
</dbReference>
<dbReference type="RefSeq" id="XP_054185886.1">
    <molecule id="O00453-1"/>
    <property type="nucleotide sequence ID" value="XM_054329911.1"/>
</dbReference>
<dbReference type="RefSeq" id="XP_054185887.1">
    <molecule id="O00453-13"/>
    <property type="nucleotide sequence ID" value="XM_054329912.1"/>
</dbReference>
<dbReference type="RefSeq" id="XP_054185888.1">
    <molecule id="O00453-5"/>
    <property type="nucleotide sequence ID" value="XM_054329913.1"/>
</dbReference>
<dbReference type="RefSeq" id="XP_054186375.1">
    <molecule id="O00453-11"/>
    <property type="nucleotide sequence ID" value="XM_054330400.1"/>
</dbReference>
<dbReference type="RefSeq" id="XP_054186376.1">
    <molecule id="O00453-11"/>
    <property type="nucleotide sequence ID" value="XM_054330401.1"/>
</dbReference>
<dbReference type="RefSeq" id="XP_054186377.1">
    <molecule id="O00453-1"/>
    <property type="nucleotide sequence ID" value="XM_054330402.1"/>
</dbReference>
<dbReference type="RefSeq" id="XP_054186378.1">
    <molecule id="O00453-1"/>
    <property type="nucleotide sequence ID" value="XM_054330403.1"/>
</dbReference>
<dbReference type="RefSeq" id="XP_054186379.1">
    <molecule id="O00453-13"/>
    <property type="nucleotide sequence ID" value="XM_054330404.1"/>
</dbReference>
<dbReference type="RefSeq" id="XP_054186380.1">
    <molecule id="O00453-5"/>
    <property type="nucleotide sequence ID" value="XM_054330405.1"/>
</dbReference>
<dbReference type="RefSeq" id="XP_054186655.1">
    <molecule id="O00453-11"/>
    <property type="nucleotide sequence ID" value="XM_054330680.1"/>
</dbReference>
<dbReference type="RefSeq" id="XP_054186656.1">
    <molecule id="O00453-11"/>
    <property type="nucleotide sequence ID" value="XM_054330681.1"/>
</dbReference>
<dbReference type="RefSeq" id="XP_054186657.1">
    <molecule id="O00453-1"/>
    <property type="nucleotide sequence ID" value="XM_054330682.1"/>
</dbReference>
<dbReference type="RefSeq" id="XP_054186658.1">
    <molecule id="O00453-13"/>
    <property type="nucleotide sequence ID" value="XM_054330683.1"/>
</dbReference>
<dbReference type="RefSeq" id="XP_054186659.1">
    <molecule id="O00453-5"/>
    <property type="nucleotide sequence ID" value="XM_054330684.1"/>
</dbReference>
<dbReference type="RefSeq" id="XP_054186867.1">
    <molecule id="O00453-11"/>
    <property type="nucleotide sequence ID" value="XM_054330892.1"/>
</dbReference>
<dbReference type="RefSeq" id="XP_054186868.1">
    <molecule id="O00453-11"/>
    <property type="nucleotide sequence ID" value="XM_054330893.1"/>
</dbReference>
<dbReference type="RefSeq" id="XP_054186869.1">
    <molecule id="O00453-11"/>
    <property type="nucleotide sequence ID" value="XM_054330894.1"/>
</dbReference>
<dbReference type="RefSeq" id="XP_054186870.1">
    <molecule id="O00453-1"/>
    <property type="nucleotide sequence ID" value="XM_054330895.1"/>
</dbReference>
<dbReference type="RefSeq" id="XP_054186871.1">
    <molecule id="O00453-1"/>
    <property type="nucleotide sequence ID" value="XM_054330896.1"/>
</dbReference>
<dbReference type="RefSeq" id="XP_054186872.1">
    <molecule id="O00453-13"/>
    <property type="nucleotide sequence ID" value="XM_054330897.1"/>
</dbReference>
<dbReference type="RefSeq" id="XP_054186873.1">
    <molecule id="O00453-5"/>
    <property type="nucleotide sequence ID" value="XM_054330898.1"/>
</dbReference>
<dbReference type="RefSeq" id="XP_054187151.1">
    <molecule id="O00453-11"/>
    <property type="nucleotide sequence ID" value="XM_054331176.1"/>
</dbReference>
<dbReference type="RefSeq" id="XP_054187152.1">
    <molecule id="O00453-11"/>
    <property type="nucleotide sequence ID" value="XM_054331177.1"/>
</dbReference>
<dbReference type="RefSeq" id="XP_054187153.1">
    <molecule id="O00453-1"/>
    <property type="nucleotide sequence ID" value="XM_054331178.1"/>
</dbReference>
<dbReference type="RefSeq" id="XP_054187154.1">
    <molecule id="O00453-1"/>
    <property type="nucleotide sequence ID" value="XM_054331179.1"/>
</dbReference>
<dbReference type="RefSeq" id="XP_054187155.1">
    <molecule id="O00453-13"/>
    <property type="nucleotide sequence ID" value="XM_054331180.1"/>
</dbReference>
<dbReference type="RefSeq" id="XP_054187156.1">
    <molecule id="O00453-5"/>
    <property type="nucleotide sequence ID" value="XM_054331181.1"/>
</dbReference>
<dbReference type="RefSeq" id="XP_054187390.1">
    <molecule id="O00453-11"/>
    <property type="nucleotide sequence ID" value="XM_054331415.1"/>
</dbReference>
<dbReference type="RefSeq" id="XP_054187391.1">
    <molecule id="O00453-11"/>
    <property type="nucleotide sequence ID" value="XM_054331416.1"/>
</dbReference>
<dbReference type="RefSeq" id="XP_054187392.1">
    <molecule id="O00453-13"/>
    <property type="nucleotide sequence ID" value="XM_054331417.1"/>
</dbReference>
<dbReference type="RefSeq" id="XP_054187393.1">
    <molecule id="O00453-5"/>
    <property type="nucleotide sequence ID" value="XM_054331418.1"/>
</dbReference>
<dbReference type="RefSeq" id="XP_054212387.1">
    <molecule id="O00453-11"/>
    <property type="nucleotide sequence ID" value="XM_054356412.1"/>
</dbReference>
<dbReference type="RefSeq" id="XP_054212388.1">
    <molecule id="O00453-11"/>
    <property type="nucleotide sequence ID" value="XM_054356413.1"/>
</dbReference>
<dbReference type="RefSeq" id="XP_054212389.1">
    <molecule id="O00453-11"/>
    <property type="nucleotide sequence ID" value="XM_054356414.1"/>
</dbReference>
<dbReference type="RefSeq" id="XP_054212390.1">
    <molecule id="O00453-1"/>
    <property type="nucleotide sequence ID" value="XM_054356415.1"/>
</dbReference>
<dbReference type="RefSeq" id="XP_054212391.1">
    <molecule id="O00453-1"/>
    <property type="nucleotide sequence ID" value="XM_054356416.1"/>
</dbReference>
<dbReference type="RefSeq" id="XP_054212392.1">
    <molecule id="O00453-13"/>
    <property type="nucleotide sequence ID" value="XM_054356417.1"/>
</dbReference>
<dbReference type="RefSeq" id="XP_054212393.1">
    <molecule id="O00453-5"/>
    <property type="nucleotide sequence ID" value="XM_054356418.1"/>
</dbReference>
<dbReference type="SMR" id="O00453"/>
<dbReference type="BioGRID" id="113666">
    <property type="interactions" value="5"/>
</dbReference>
<dbReference type="FunCoup" id="O00453">
    <property type="interactions" value="94"/>
</dbReference>
<dbReference type="IntAct" id="O00453">
    <property type="interactions" value="3"/>
</dbReference>
<dbReference type="STRING" id="9606.ENSP00000365261"/>
<dbReference type="iPTMnet" id="O00453"/>
<dbReference type="PhosphoSitePlus" id="O00453"/>
<dbReference type="SwissPalm" id="O00453"/>
<dbReference type="BioMuta" id="LST1"/>
<dbReference type="jPOST" id="O00453"/>
<dbReference type="MassIVE" id="O00453"/>
<dbReference type="PaxDb" id="9606-ENSP00000365261"/>
<dbReference type="PeptideAtlas" id="O00453"/>
<dbReference type="ProteomicsDB" id="47899">
    <molecule id="O00453-1"/>
</dbReference>
<dbReference type="ProteomicsDB" id="47900">
    <molecule id="O00453-10"/>
</dbReference>
<dbReference type="ProteomicsDB" id="47901">
    <molecule id="O00453-2"/>
</dbReference>
<dbReference type="ProteomicsDB" id="47902">
    <molecule id="O00453-3"/>
</dbReference>
<dbReference type="ProteomicsDB" id="47903">
    <molecule id="O00453-4"/>
</dbReference>
<dbReference type="ProteomicsDB" id="47904">
    <molecule id="O00453-5"/>
</dbReference>
<dbReference type="ProteomicsDB" id="47905">
    <molecule id="O00453-6"/>
</dbReference>
<dbReference type="ProteomicsDB" id="63775"/>
<dbReference type="ProteomicsDB" id="63901"/>
<dbReference type="TopDownProteomics" id="O00453-12">
    <molecule id="O00453-12"/>
</dbReference>
<dbReference type="Antibodypedia" id="27216">
    <property type="antibodies" value="172 antibodies from 26 providers"/>
</dbReference>
<dbReference type="DNASU" id="7940"/>
<dbReference type="Ensembl" id="ENST00000303757.12">
    <molecule id="O00453-5"/>
    <property type="protein sequence ID" value="ENSP00000303649.7"/>
    <property type="gene ID" value="ENSG00000204482.11"/>
</dbReference>
<dbReference type="Ensembl" id="ENST00000339530.8">
    <molecule id="O00453-12"/>
    <property type="protein sequence ID" value="ENSP00000339201.4"/>
    <property type="gene ID" value="ENSG00000204482.11"/>
</dbReference>
<dbReference type="Ensembl" id="ENST00000376086.7">
    <molecule id="O00453-13"/>
    <property type="protein sequence ID" value="ENSP00000365254.3"/>
    <property type="gene ID" value="ENSG00000204482.11"/>
</dbReference>
<dbReference type="Ensembl" id="ENST00000376089.6">
    <molecule id="O00453-10"/>
    <property type="protein sequence ID" value="ENSP00000365257.2"/>
    <property type="gene ID" value="ENSG00000204482.11"/>
</dbReference>
<dbReference type="Ensembl" id="ENST00000376092.7">
    <molecule id="O00453-8"/>
    <property type="protein sequence ID" value="ENSP00000365260.3"/>
    <property type="gene ID" value="ENSG00000204482.11"/>
</dbReference>
<dbReference type="Ensembl" id="ENST00000376093.6">
    <molecule id="O00453-11"/>
    <property type="protein sequence ID" value="ENSP00000365261.2"/>
    <property type="gene ID" value="ENSG00000204482.11"/>
</dbReference>
<dbReference type="Ensembl" id="ENST00000376096.5">
    <molecule id="O00453-9"/>
    <property type="protein sequence ID" value="ENSP00000365264.1"/>
    <property type="gene ID" value="ENSG00000204482.11"/>
</dbReference>
<dbReference type="Ensembl" id="ENST00000376110.7">
    <molecule id="O00453-6"/>
    <property type="protein sequence ID" value="ENSP00000365278.3"/>
    <property type="gene ID" value="ENSG00000204482.11"/>
</dbReference>
<dbReference type="Ensembl" id="ENST00000383480.6">
    <molecule id="O00453-13"/>
    <property type="protein sequence ID" value="ENSP00000372972.2"/>
    <property type="gene ID" value="ENSG00000206433.10"/>
</dbReference>
<dbReference type="Ensembl" id="ENST00000383482.2">
    <molecule id="O00453-8"/>
    <property type="protein sequence ID" value="ENSP00000372974.2"/>
    <property type="gene ID" value="ENSG00000206433.10"/>
</dbReference>
<dbReference type="Ensembl" id="ENST00000383484.6">
    <molecule id="O00453-12"/>
    <property type="protein sequence ID" value="ENSP00000372976.2"/>
    <property type="gene ID" value="ENSG00000206433.10"/>
</dbReference>
<dbReference type="Ensembl" id="ENST00000383486.6">
    <molecule id="O00453-11"/>
    <property type="protein sequence ID" value="ENSP00000372978.2"/>
    <property type="gene ID" value="ENSG00000206433.10"/>
</dbReference>
<dbReference type="Ensembl" id="ENST00000400250.5">
    <molecule id="O00453-5"/>
    <property type="protein sequence ID" value="ENSP00000383109.1"/>
    <property type="gene ID" value="ENSG00000206433.10"/>
</dbReference>
<dbReference type="Ensembl" id="ENST00000400257.5">
    <molecule id="O00453-9"/>
    <property type="protein sequence ID" value="ENSP00000383116.1"/>
    <property type="gene ID" value="ENSG00000206433.10"/>
</dbReference>
<dbReference type="Ensembl" id="ENST00000400262.5">
    <molecule id="O00453-10"/>
    <property type="protein sequence ID" value="ENSP00000383121.1"/>
    <property type="gene ID" value="ENSG00000206433.10"/>
</dbReference>
<dbReference type="Ensembl" id="ENST00000400263.5">
    <molecule id="O00453-10"/>
    <property type="protein sequence ID" value="ENSP00000383122.1"/>
    <property type="gene ID" value="ENSG00000206433.10"/>
</dbReference>
<dbReference type="Ensembl" id="ENST00000400264.5">
    <molecule id="O00453-1"/>
    <property type="protein sequence ID" value="ENSP00000383123.1"/>
    <property type="gene ID" value="ENSG00000206433.10"/>
</dbReference>
<dbReference type="Ensembl" id="ENST00000400265.5">
    <molecule id="O00453-6"/>
    <property type="protein sequence ID" value="ENSP00000383124.1"/>
    <property type="gene ID" value="ENSG00000206433.10"/>
</dbReference>
<dbReference type="Ensembl" id="ENST00000411490.5">
    <molecule id="O00453-1"/>
    <property type="protein sequence ID" value="ENSP00000395409.1"/>
    <property type="gene ID" value="ENSG00000235915.8"/>
</dbReference>
<dbReference type="Ensembl" id="ENST00000412041.5">
    <molecule id="O00453-11"/>
    <property type="protein sequence ID" value="ENSP00000399411.1"/>
    <property type="gene ID" value="ENSG00000231048.8"/>
</dbReference>
<dbReference type="Ensembl" id="ENST00000412623.1">
    <molecule id="O00453-11"/>
    <property type="protein sequence ID" value="ENSP00000409229.1"/>
    <property type="gene ID" value="ENSG00000226182.8"/>
</dbReference>
<dbReference type="Ensembl" id="ENST00000413426.5">
    <molecule id="O00453-9"/>
    <property type="protein sequence ID" value="ENSP00000408876.1"/>
    <property type="gene ID" value="ENSG00000231048.8"/>
</dbReference>
<dbReference type="Ensembl" id="ENST00000414266.5">
    <molecule id="O00453-10"/>
    <property type="protein sequence ID" value="ENSP00000402707.1"/>
    <property type="gene ID" value="ENSG00000223465.8"/>
</dbReference>
<dbReference type="Ensembl" id="ENST00000415419.5">
    <molecule id="O00453-6"/>
    <property type="protein sequence ID" value="ENSP00000415143.1"/>
    <property type="gene ID" value="ENSG00000235915.8"/>
</dbReference>
<dbReference type="Ensembl" id="ENST00000415490.5">
    <molecule id="O00453-8"/>
    <property type="protein sequence ID" value="ENSP00000390658.1"/>
    <property type="gene ID" value="ENSG00000234514.8"/>
</dbReference>
<dbReference type="Ensembl" id="ENST00000415781.5">
    <molecule id="O00453-9"/>
    <property type="protein sequence ID" value="ENSP00000401655.1"/>
    <property type="gene ID" value="ENSG00000226182.8"/>
</dbReference>
<dbReference type="Ensembl" id="ENST00000417428.5">
    <molecule id="O00453-1"/>
    <property type="protein sequence ID" value="ENSP00000394614.1"/>
    <property type="gene ID" value="ENSG00000223465.8"/>
</dbReference>
<dbReference type="Ensembl" id="ENST00000418507.6">
    <molecule id="O00453-10"/>
    <property type="protein sequence ID" value="ENSP00000405900.2"/>
    <property type="gene ID" value="ENSG00000204482.11"/>
</dbReference>
<dbReference type="Ensembl" id="ENST00000420157.5">
    <molecule id="O00453-10"/>
    <property type="protein sequence ID" value="ENSP00000398700.1"/>
    <property type="gene ID" value="ENSG00000226182.8"/>
</dbReference>
<dbReference type="Ensembl" id="ENST00000420333.5">
    <molecule id="O00453-5"/>
    <property type="protein sequence ID" value="ENSP00000411547.1"/>
    <property type="gene ID" value="ENSG00000230791.8"/>
</dbReference>
<dbReference type="Ensembl" id="ENST00000420676.5">
    <molecule id="O00453-13"/>
    <property type="protein sequence ID" value="ENSP00000414246.1"/>
    <property type="gene ID" value="ENSG00000226182.8"/>
</dbReference>
<dbReference type="Ensembl" id="ENST00000420785.5">
    <molecule id="O00453-12"/>
    <property type="protein sequence ID" value="ENSP00000393345.1"/>
    <property type="gene ID" value="ENSG00000234514.8"/>
</dbReference>
<dbReference type="Ensembl" id="ENST00000420797.5">
    <molecule id="O00453-10"/>
    <property type="protein sequence ID" value="ENSP00000390587.1"/>
    <property type="gene ID" value="ENSG00000235915.8"/>
</dbReference>
<dbReference type="Ensembl" id="ENST00000422035.5">
    <molecule id="O00453-6"/>
    <property type="protein sequence ID" value="ENSP00000396431.1"/>
    <property type="gene ID" value="ENSG00000226182.8"/>
</dbReference>
<dbReference type="Ensembl" id="ENST00000422533.5">
    <molecule id="O00453-5"/>
    <property type="protein sequence ID" value="ENSP00000412627.1"/>
    <property type="gene ID" value="ENSG00000226182.8"/>
</dbReference>
<dbReference type="Ensembl" id="ENST00000423107.6">
    <molecule id="O00453-10"/>
    <property type="protein sequence ID" value="ENSP00000406438.2"/>
    <property type="gene ID" value="ENSG00000234514.8"/>
</dbReference>
<dbReference type="Ensembl" id="ENST00000423871.5">
    <molecule id="O00453-6"/>
    <property type="protein sequence ID" value="ENSP00000400069.1"/>
    <property type="gene ID" value="ENSG00000223465.8"/>
</dbReference>
<dbReference type="Ensembl" id="ENST00000425760.5">
    <molecule id="O00453-8"/>
    <property type="protein sequence ID" value="ENSP00000409698.1"/>
    <property type="gene ID" value="ENSG00000231048.8"/>
</dbReference>
<dbReference type="Ensembl" id="ENST00000426938.5">
    <molecule id="O00453-1"/>
    <property type="protein sequence ID" value="ENSP00000404051.1"/>
    <property type="gene ID" value="ENSG00000234514.8"/>
</dbReference>
<dbReference type="Ensembl" id="ENST00000427186.5">
    <molecule id="O00453-8"/>
    <property type="protein sequence ID" value="ENSP00000399439.1"/>
    <property type="gene ID" value="ENSG00000235915.8"/>
</dbReference>
<dbReference type="Ensembl" id="ENST00000427507.6">
    <molecule id="O00453-1"/>
    <property type="protein sequence ID" value="ENSP00000416283.2"/>
    <property type="gene ID" value="ENSG00000223465.8"/>
</dbReference>
<dbReference type="Ensembl" id="ENST00000428227.5">
    <molecule id="O00453-10"/>
    <property type="protein sequence ID" value="ENSP00000413526.1"/>
    <property type="gene ID" value="ENSG00000234514.8"/>
</dbReference>
<dbReference type="Ensembl" id="ENST00000428405.5">
    <molecule id="O00453-10"/>
    <property type="protein sequence ID" value="ENSP00000391963.1"/>
    <property type="gene ID" value="ENSG00000230791.8"/>
</dbReference>
<dbReference type="Ensembl" id="ENST00000428898.5">
    <molecule id="O00453-9"/>
    <property type="protein sequence ID" value="ENSP00000389694.1"/>
    <property type="gene ID" value="ENSG00000230791.8"/>
</dbReference>
<dbReference type="Ensembl" id="ENST00000429874.5">
    <molecule id="O00453-1"/>
    <property type="protein sequence ID" value="ENSP00000387560.1"/>
    <property type="gene ID" value="ENSG00000230791.8"/>
</dbReference>
<dbReference type="Ensembl" id="ENST00000429910.5">
    <molecule id="O00453-5"/>
    <property type="protein sequence ID" value="ENSP00000399063.1"/>
    <property type="gene ID" value="ENSG00000223465.8"/>
</dbReference>
<dbReference type="Ensembl" id="ENST00000430632.5">
    <molecule id="O00453-1"/>
    <property type="protein sequence ID" value="ENSP00000392949.1"/>
    <property type="gene ID" value="ENSG00000231048.8"/>
</dbReference>
<dbReference type="Ensembl" id="ENST00000430680.5">
    <molecule id="O00453-12"/>
    <property type="protein sequence ID" value="ENSP00000398918.1"/>
    <property type="gene ID" value="ENSG00000235915.8"/>
</dbReference>
<dbReference type="Ensembl" id="ENST00000430997.5">
    <molecule id="O00453-5"/>
    <property type="protein sequence ID" value="ENSP00000389795.1"/>
    <property type="gene ID" value="ENSG00000235915.8"/>
</dbReference>
<dbReference type="Ensembl" id="ENST00000432009.6">
    <molecule id="O00453-10"/>
    <property type="protein sequence ID" value="ENSP00000409433.2"/>
    <property type="gene ID" value="ENSG00000226182.8"/>
</dbReference>
<dbReference type="Ensembl" id="ENST00000432164.5">
    <molecule id="O00453-8"/>
    <property type="protein sequence ID" value="ENSP00000394834.1"/>
    <property type="gene ID" value="ENSG00000223465.8"/>
</dbReference>
<dbReference type="Ensembl" id="ENST00000433004.5">
    <molecule id="O00453-10"/>
    <property type="protein sequence ID" value="ENSP00000390430.1"/>
    <property type="gene ID" value="ENSG00000226182.8"/>
</dbReference>
<dbReference type="Ensembl" id="ENST00000433305.5">
    <molecule id="O00453-8"/>
    <property type="protein sequence ID" value="ENSP00000407417.1"/>
    <property type="gene ID" value="ENSG00000230791.8"/>
</dbReference>
<dbReference type="Ensembl" id="ENST00000433676.6">
    <molecule id="O00453-10"/>
    <property type="protein sequence ID" value="ENSP00000411866.2"/>
    <property type="gene ID" value="ENSG00000235915.8"/>
</dbReference>
<dbReference type="Ensembl" id="ENST00000434314.6">
    <molecule id="O00453-1"/>
    <property type="protein sequence ID" value="ENSP00000414173.2"/>
    <property type="gene ID" value="ENSG00000226182.8"/>
</dbReference>
<dbReference type="Ensembl" id="ENST00000436037.5">
    <molecule id="O00453-11"/>
    <property type="protein sequence ID" value="ENSP00000398685.1"/>
    <property type="gene ID" value="ENSG00000234514.8"/>
</dbReference>
<dbReference type="Ensembl" id="ENST00000436185.5">
    <molecule id="O00453-10"/>
    <property type="protein sequence ID" value="ENSP00000396579.1"/>
    <property type="gene ID" value="ENSG00000235915.8"/>
</dbReference>
<dbReference type="Ensembl" id="ENST00000437137.6">
    <molecule id="O00453-1"/>
    <property type="protein sequence ID" value="ENSP00000412276.2"/>
    <property type="gene ID" value="ENSG00000231048.8"/>
</dbReference>
<dbReference type="Ensembl" id="ENST00000437436.5">
    <molecule id="O00453-6"/>
    <property type="protein sequence ID" value="ENSP00000394891.1"/>
    <property type="gene ID" value="ENSG00000231048.8"/>
</dbReference>
<dbReference type="Ensembl" id="ENST00000437812.5">
    <molecule id="O00453-11"/>
    <property type="protein sequence ID" value="ENSP00000396179.1"/>
    <property type="gene ID" value="ENSG00000223465.8"/>
</dbReference>
<dbReference type="Ensembl" id="ENST00000438075.7">
    <molecule id="O00453-1"/>
    <property type="protein sequence ID" value="ENSP00000391929.3"/>
    <property type="gene ID" value="ENSG00000204482.11"/>
</dbReference>
<dbReference type="Ensembl" id="ENST00000438335.5">
    <molecule id="O00453-11"/>
    <property type="protein sequence ID" value="ENSP00000403097.1"/>
    <property type="gene ID" value="ENSG00000235915.8"/>
</dbReference>
<dbReference type="Ensembl" id="ENST00000438349.5">
    <molecule id="O00453-6"/>
    <property type="protein sequence ID" value="ENSP00000391057.1"/>
    <property type="gene ID" value="ENSG00000234514.8"/>
</dbReference>
<dbReference type="Ensembl" id="ENST00000438381.5">
    <molecule id="O00453-12"/>
    <property type="protein sequence ID" value="ENSP00000393282.1"/>
    <property type="gene ID" value="ENSG00000230791.8"/>
</dbReference>
<dbReference type="Ensembl" id="ENST00000440242.5">
    <molecule id="O00453-13"/>
    <property type="protein sequence ID" value="ENSP00000394815.1"/>
    <property type="gene ID" value="ENSG00000223465.8"/>
</dbReference>
<dbReference type="Ensembl" id="ENST00000440253.5">
    <molecule id="O00453-10"/>
    <property type="protein sequence ID" value="ENSP00000396235.1"/>
    <property type="gene ID" value="ENSG00000223465.8"/>
</dbReference>
<dbReference type="Ensembl" id="ENST00000440323.5">
    <molecule id="O00453-10"/>
    <property type="protein sequence ID" value="ENSP00000414744.1"/>
    <property type="gene ID" value="ENSG00000231048.8"/>
</dbReference>
<dbReference type="Ensembl" id="ENST00000440328.5">
    <molecule id="O00453-8"/>
    <property type="protein sequence ID" value="ENSP00000401516.1"/>
    <property type="gene ID" value="ENSG00000226182.8"/>
</dbReference>
<dbReference type="Ensembl" id="ENST00000442052.5">
    <molecule id="O00453-12"/>
    <property type="protein sequence ID" value="ENSP00000399474.1"/>
    <property type="gene ID" value="ENSG00000226182.8"/>
</dbReference>
<dbReference type="Ensembl" id="ENST00000443340.6">
    <molecule id="O00453-1"/>
    <property type="protein sequence ID" value="ENSP00000396533.2"/>
    <property type="gene ID" value="ENSG00000206433.10"/>
</dbReference>
<dbReference type="Ensembl" id="ENST00000443655.5">
    <molecule id="O00453-5"/>
    <property type="protein sequence ID" value="ENSP00000411961.1"/>
    <property type="gene ID" value="ENSG00000231048.8"/>
</dbReference>
<dbReference type="Ensembl" id="ENST00000443741.6">
    <molecule id="O00453-1"/>
    <property type="protein sequence ID" value="ENSP00000388956.2"/>
    <property type="gene ID" value="ENSG00000235915.8"/>
</dbReference>
<dbReference type="Ensembl" id="ENST00000446239.5">
    <molecule id="O00453-6"/>
    <property type="protein sequence ID" value="ENSP00000402873.1"/>
    <property type="gene ID" value="ENSG00000230791.8"/>
</dbReference>
<dbReference type="Ensembl" id="ENST00000447141.5">
    <molecule id="O00453-9"/>
    <property type="protein sequence ID" value="ENSP00000397826.1"/>
    <property type="gene ID" value="ENSG00000235915.8"/>
</dbReference>
<dbReference type="Ensembl" id="ENST00000447391.5">
    <molecule id="O00453-10"/>
    <property type="protein sequence ID" value="ENSP00000411087.1"/>
    <property type="gene ID" value="ENSG00000230791.8"/>
</dbReference>
<dbReference type="Ensembl" id="ENST00000448236.5">
    <molecule id="O00453-11"/>
    <property type="protein sequence ID" value="ENSP00000406455.1"/>
    <property type="gene ID" value="ENSG00000230791.8"/>
</dbReference>
<dbReference type="Ensembl" id="ENST00000448441.6">
    <molecule id="O00453-10"/>
    <property type="protein sequence ID" value="ENSP00000409008.2"/>
    <property type="gene ID" value="ENSG00000206433.10"/>
</dbReference>
<dbReference type="Ensembl" id="ENST00000449236.5">
    <molecule id="O00453-10"/>
    <property type="protein sequence ID" value="ENSP00000391420.1"/>
    <property type="gene ID" value="ENSG00000231048.8"/>
</dbReference>
<dbReference type="Ensembl" id="ENST00000449273.5">
    <molecule id="O00453-5"/>
    <property type="protein sequence ID" value="ENSP00000415623.1"/>
    <property type="gene ID" value="ENSG00000234514.8"/>
</dbReference>
<dbReference type="Ensembl" id="ENST00000450291.5">
    <molecule id="O00453-13"/>
    <property type="protein sequence ID" value="ENSP00000404500.1"/>
    <property type="gene ID" value="ENSG00000230791.8"/>
</dbReference>
<dbReference type="Ensembl" id="ENST00000450425.6">
    <molecule id="O00453-10"/>
    <property type="protein sequence ID" value="ENSP00000415168.2"/>
    <property type="gene ID" value="ENSG00000223465.8"/>
</dbReference>
<dbReference type="Ensembl" id="ENST00000451641.5">
    <molecule id="O00453-12"/>
    <property type="protein sequence ID" value="ENSP00000406625.1"/>
    <property type="gene ID" value="ENSG00000223465.8"/>
</dbReference>
<dbReference type="Ensembl" id="ENST00000451922.5">
    <molecule id="O00453-13"/>
    <property type="protein sequence ID" value="ENSP00000401567.1"/>
    <property type="gene ID" value="ENSG00000231048.8"/>
</dbReference>
<dbReference type="Ensembl" id="ENST00000452169.5">
    <molecule id="O00453-12"/>
    <property type="protein sequence ID" value="ENSP00000416808.1"/>
    <property type="gene ID" value="ENSG00000231048.8"/>
</dbReference>
<dbReference type="Ensembl" id="ENST00000453995.6">
    <molecule id="O00453-1"/>
    <property type="protein sequence ID" value="ENSP00000409163.2"/>
    <property type="gene ID" value="ENSG00000230791.8"/>
</dbReference>
<dbReference type="Ensembl" id="ENST00000454168.5">
    <molecule id="O00453-13"/>
    <property type="protein sequence ID" value="ENSP00000396004.1"/>
    <property type="gene ID" value="ENSG00000234514.8"/>
</dbReference>
<dbReference type="Ensembl" id="ENST00000455003.5">
    <molecule id="O00453-1"/>
    <property type="protein sequence ID" value="ENSP00000396181.1"/>
    <property type="gene ID" value="ENSG00000226182.8"/>
</dbReference>
<dbReference type="Ensembl" id="ENST00000455052.5">
    <molecule id="O00453-10"/>
    <property type="protein sequence ID" value="ENSP00000398228.1"/>
    <property type="gene ID" value="ENSG00000234514.8"/>
</dbReference>
<dbReference type="Ensembl" id="ENST00000455426.6">
    <molecule id="O00453-10"/>
    <property type="protein sequence ID" value="ENSP00000398780.2"/>
    <property type="gene ID" value="ENSG00000231048.8"/>
</dbReference>
<dbReference type="Ensembl" id="ENST00000455493.5">
    <molecule id="O00453-9"/>
    <property type="protein sequence ID" value="ENSP00000401650.1"/>
    <property type="gene ID" value="ENSG00000223465.8"/>
</dbReference>
<dbReference type="Ensembl" id="ENST00000455655.6">
    <molecule id="O00453-10"/>
    <property type="protein sequence ID" value="ENSP00000415526.2"/>
    <property type="gene ID" value="ENSG00000230791.8"/>
</dbReference>
<dbReference type="Ensembl" id="ENST00000455901.6">
    <molecule id="O00453-1"/>
    <property type="protein sequence ID" value="ENSP00000396378.2"/>
    <property type="gene ID" value="ENSG00000234514.8"/>
</dbReference>
<dbReference type="Ensembl" id="ENST00000457549.5">
    <molecule id="O00453-13"/>
    <property type="protein sequence ID" value="ENSP00000390885.1"/>
    <property type="gene ID" value="ENSG00000235915.8"/>
</dbReference>
<dbReference type="Ensembl" id="ENST00000458456.5">
    <molecule id="O00453-9"/>
    <property type="protein sequence ID" value="ENSP00000405920.1"/>
    <property type="gene ID" value="ENSG00000234514.8"/>
</dbReference>
<dbReference type="GeneID" id="7940"/>
<dbReference type="KEGG" id="hsa:7940"/>
<dbReference type="MANE-Select" id="ENST00000438075.7">
    <property type="protein sequence ID" value="ENSP00000391929.3"/>
    <property type="RefSeq nucleotide sequence ID" value="NM_205839.3"/>
    <property type="RefSeq protein sequence ID" value="NP_995311.2"/>
</dbReference>
<dbReference type="UCSC" id="uc021yus.1">
    <molecule id="O00453-1"/>
    <property type="organism name" value="human"/>
</dbReference>
<dbReference type="AGR" id="HGNC:14189"/>
<dbReference type="CTD" id="7940"/>
<dbReference type="DisGeNET" id="7940"/>
<dbReference type="GeneCards" id="LST1"/>
<dbReference type="HGNC" id="HGNC:14189">
    <property type="gene designation" value="LST1"/>
</dbReference>
<dbReference type="HPA" id="ENSG00000204482">
    <property type="expression patterns" value="Tissue enhanced (bone marrow, lymphoid tissue)"/>
</dbReference>
<dbReference type="MIM" id="109170">
    <property type="type" value="gene"/>
</dbReference>
<dbReference type="neXtProt" id="NX_O00453"/>
<dbReference type="OpenTargets" id="ENSG00000204482"/>
<dbReference type="PharmGKB" id="PA37856"/>
<dbReference type="VEuPathDB" id="HostDB:ENSG00000204482"/>
<dbReference type="eggNOG" id="ENOG502TDBU">
    <property type="taxonomic scope" value="Eukaryota"/>
</dbReference>
<dbReference type="GeneTree" id="ENSGT00730000112003"/>
<dbReference type="HOGENOM" id="CLU_166968_0_0_1"/>
<dbReference type="InParanoid" id="O00453"/>
<dbReference type="OMA" id="FICLCRG"/>
<dbReference type="OrthoDB" id="9717492at2759"/>
<dbReference type="PAN-GO" id="O00453">
    <property type="GO annotations" value="2 GO annotations based on evolutionary models"/>
</dbReference>
<dbReference type="PhylomeDB" id="O00453"/>
<dbReference type="TreeFam" id="TF338533"/>
<dbReference type="PathwayCommons" id="O00453"/>
<dbReference type="SignaLink" id="O00453"/>
<dbReference type="BioGRID-ORCS" id="7940">
    <property type="hits" value="110 hits in 1142 CRISPR screens"/>
</dbReference>
<dbReference type="ChiTaRS" id="LST1">
    <property type="organism name" value="human"/>
</dbReference>
<dbReference type="GeneWiki" id="LST1"/>
<dbReference type="GenomeRNAi" id="7940"/>
<dbReference type="Pharos" id="O00453">
    <property type="development level" value="Tbio"/>
</dbReference>
<dbReference type="PRO" id="PR:O00453"/>
<dbReference type="Proteomes" id="UP000005640">
    <property type="component" value="Chromosome 6"/>
</dbReference>
<dbReference type="RNAct" id="O00453">
    <property type="molecule type" value="protein"/>
</dbReference>
<dbReference type="Bgee" id="ENSG00000204482">
    <property type="expression patterns" value="Expressed in granulocyte and 173 other cell types or tissues"/>
</dbReference>
<dbReference type="ExpressionAtlas" id="O00453">
    <property type="expression patterns" value="baseline and differential"/>
</dbReference>
<dbReference type="GO" id="GO:0005737">
    <property type="term" value="C:cytoplasm"/>
    <property type="evidence" value="ECO:0000314"/>
    <property type="project" value="UniProtKB"/>
</dbReference>
<dbReference type="GO" id="GO:0005829">
    <property type="term" value="C:cytosol"/>
    <property type="evidence" value="ECO:0000314"/>
    <property type="project" value="HPA"/>
</dbReference>
<dbReference type="GO" id="GO:0005794">
    <property type="term" value="C:Golgi apparatus"/>
    <property type="evidence" value="ECO:0000303"/>
    <property type="project" value="UniProtKB"/>
</dbReference>
<dbReference type="GO" id="GO:0000139">
    <property type="term" value="C:Golgi membrane"/>
    <property type="evidence" value="ECO:0007669"/>
    <property type="project" value="UniProtKB-SubCell"/>
</dbReference>
<dbReference type="GO" id="GO:0016020">
    <property type="term" value="C:membrane"/>
    <property type="evidence" value="ECO:0000314"/>
    <property type="project" value="UniProtKB"/>
</dbReference>
<dbReference type="GO" id="GO:0005886">
    <property type="term" value="C:plasma membrane"/>
    <property type="evidence" value="ECO:0000314"/>
    <property type="project" value="HPA"/>
</dbReference>
<dbReference type="GO" id="GO:0009653">
    <property type="term" value="P:anatomical structure morphogenesis"/>
    <property type="evidence" value="ECO:0000303"/>
    <property type="project" value="UniProtKB"/>
</dbReference>
<dbReference type="GO" id="GO:0000902">
    <property type="term" value="P:cell morphogenesis"/>
    <property type="evidence" value="ECO:0007669"/>
    <property type="project" value="InterPro"/>
</dbReference>
<dbReference type="GO" id="GO:0016358">
    <property type="term" value="P:dendrite development"/>
    <property type="evidence" value="ECO:0000314"/>
    <property type="project" value="UniProtKB"/>
</dbReference>
<dbReference type="GO" id="GO:0006955">
    <property type="term" value="P:immune response"/>
    <property type="evidence" value="ECO:0000303"/>
    <property type="project" value="UniProtKB"/>
</dbReference>
<dbReference type="GO" id="GO:0050672">
    <property type="term" value="P:negative regulation of lymphocyte proliferation"/>
    <property type="evidence" value="ECO:0000314"/>
    <property type="project" value="UniProtKB"/>
</dbReference>
<dbReference type="GO" id="GO:0008360">
    <property type="term" value="P:regulation of cell shape"/>
    <property type="evidence" value="ECO:0007669"/>
    <property type="project" value="UniProtKB-KW"/>
</dbReference>
<dbReference type="InterPro" id="IPR007775">
    <property type="entry name" value="Leukocyte-sp_tscrpt_1_LST1"/>
</dbReference>
<dbReference type="PANTHER" id="PTHR15452">
    <property type="entry name" value="LEUKOCYTE-SPECIFIC TRANSCRIPT 1 PROTEIN"/>
    <property type="match status" value="1"/>
</dbReference>
<dbReference type="PANTHER" id="PTHR15452:SF5">
    <property type="entry name" value="LEUKOCYTE-SPECIFIC TRANSCRIPT 1 PROTEIN"/>
    <property type="match status" value="1"/>
</dbReference>
<dbReference type="Pfam" id="PF05083">
    <property type="entry name" value="LST1"/>
    <property type="match status" value="1"/>
</dbReference>
<dbReference type="PIRSF" id="PIRSF037638">
    <property type="entry name" value="Leukocyte-sp_tscrpt_1_LST1"/>
    <property type="match status" value="1"/>
</dbReference>
<organism evidence="13">
    <name type="scientific">Homo sapiens</name>
    <name type="common">Human</name>
    <dbReference type="NCBI Taxonomy" id="9606"/>
    <lineage>
        <taxon>Eukaryota</taxon>
        <taxon>Metazoa</taxon>
        <taxon>Chordata</taxon>
        <taxon>Craniata</taxon>
        <taxon>Vertebrata</taxon>
        <taxon>Euteleostomi</taxon>
        <taxon>Mammalia</taxon>
        <taxon>Eutheria</taxon>
        <taxon>Euarchontoglires</taxon>
        <taxon>Primates</taxon>
        <taxon>Haplorrhini</taxon>
        <taxon>Catarrhini</taxon>
        <taxon>Hominidae</taxon>
        <taxon>Homo</taxon>
    </lineage>
</organism>